<sequence length="222" mass="25525">MPKVVSRSVVCSDTRDREEYDDGEKPLHVYYCLCGQMVLVLDCQLEKLPMRPRDRSRVIDAAKHAHKFCNTEDEETMYLRRPEGIERQYGKKCAKCGLPLFYQSQPKNAPVTFIVDGAVVKFGQGFGKTNIYTQKQEPPKKVMMTKRTKDMGKFSSVTVSTIDEEEEEIEAREVADSYAQNAKVIEKQLERKGMSKRRLQELAELEAKKAKMKGTLIDNQFK</sequence>
<evidence type="ECO:0000250" key="1">
    <source>
        <dbReference type="UniProtKB" id="Q9H5V9"/>
    </source>
</evidence>
<evidence type="ECO:0000255" key="2"/>
<evidence type="ECO:0000305" key="3"/>
<accession>Q5RAT0</accession>
<proteinExistence type="evidence at transcript level"/>
<gene>
    <name evidence="1" type="primary">STEEP1</name>
</gene>
<dbReference type="EMBL" id="CR858932">
    <property type="protein sequence ID" value="CAH91130.1"/>
    <property type="molecule type" value="mRNA"/>
</dbReference>
<dbReference type="RefSeq" id="NP_001125661.1">
    <property type="nucleotide sequence ID" value="NM_001132189.1"/>
</dbReference>
<dbReference type="SMR" id="Q5RAT0"/>
<dbReference type="STRING" id="9601.ENSPPYP00000023137"/>
<dbReference type="GeneID" id="100172581"/>
<dbReference type="KEGG" id="pon:100172581"/>
<dbReference type="CTD" id="63932"/>
<dbReference type="eggNOG" id="KOG4397">
    <property type="taxonomic scope" value="Eukaryota"/>
</dbReference>
<dbReference type="InParanoid" id="Q5RAT0"/>
<dbReference type="OrthoDB" id="418131at2759"/>
<dbReference type="Proteomes" id="UP000001595">
    <property type="component" value="Unplaced"/>
</dbReference>
<dbReference type="GO" id="GO:0044297">
    <property type="term" value="C:cell body"/>
    <property type="evidence" value="ECO:0000250"/>
    <property type="project" value="UniProtKB"/>
</dbReference>
<dbReference type="GO" id="GO:0005737">
    <property type="term" value="C:cytoplasm"/>
    <property type="evidence" value="ECO:0000250"/>
    <property type="project" value="UniProtKB"/>
</dbReference>
<dbReference type="GO" id="GO:0005789">
    <property type="term" value="C:endoplasmic reticulum membrane"/>
    <property type="evidence" value="ECO:0007669"/>
    <property type="project" value="UniProtKB-SubCell"/>
</dbReference>
<dbReference type="GO" id="GO:0005634">
    <property type="term" value="C:nucleus"/>
    <property type="evidence" value="ECO:0000250"/>
    <property type="project" value="UniProtKB"/>
</dbReference>
<dbReference type="GO" id="GO:0030674">
    <property type="term" value="F:protein-macromolecule adaptor activity"/>
    <property type="evidence" value="ECO:0000250"/>
    <property type="project" value="UniProtKB"/>
</dbReference>
<dbReference type="GO" id="GO:0090158">
    <property type="term" value="P:endoplasmic reticulum membrane organization"/>
    <property type="evidence" value="ECO:0000250"/>
    <property type="project" value="UniProtKB"/>
</dbReference>
<dbReference type="GO" id="GO:0006888">
    <property type="term" value="P:endoplasmic reticulum to Golgi vesicle-mediated transport"/>
    <property type="evidence" value="ECO:0000250"/>
    <property type="project" value="UniProtKB"/>
</dbReference>
<dbReference type="GO" id="GO:0032527">
    <property type="term" value="P:protein exit from endoplasmic reticulum"/>
    <property type="evidence" value="ECO:0000250"/>
    <property type="project" value="UniProtKB"/>
</dbReference>
<dbReference type="InterPro" id="IPR029704">
    <property type="entry name" value="STEEP-like"/>
</dbReference>
<dbReference type="PANTHER" id="PTHR46355:SF1">
    <property type="entry name" value="STING ER EXIT PROTEIN"/>
    <property type="match status" value="1"/>
</dbReference>
<dbReference type="PANTHER" id="PTHR46355">
    <property type="entry name" value="UPF0428 PROTEIN CXORF56"/>
    <property type="match status" value="1"/>
</dbReference>
<feature type="chain" id="PRO_0000287611" description="STING ER exit protein">
    <location>
        <begin position="1"/>
        <end position="222"/>
    </location>
</feature>
<feature type="coiled-coil region" evidence="2">
    <location>
        <begin position="170"/>
        <end position="220"/>
    </location>
</feature>
<reference key="1">
    <citation type="submission" date="2004-11" db="EMBL/GenBank/DDBJ databases">
        <authorList>
            <consortium name="The German cDNA consortium"/>
        </authorList>
    </citation>
    <scope>NUCLEOTIDE SEQUENCE [LARGE SCALE MRNA]</scope>
    <source>
        <tissue>Kidney</tissue>
    </source>
</reference>
<keyword id="KW-0175">Coiled coil</keyword>
<keyword id="KW-0963">Cytoplasm</keyword>
<keyword id="KW-0256">Endoplasmic reticulum</keyword>
<keyword id="KW-0472">Membrane</keyword>
<keyword id="KW-0539">Nucleus</keyword>
<keyword id="KW-1185">Reference proteome</keyword>
<name>STEEP_PONAB</name>
<protein>
    <recommendedName>
        <fullName evidence="1">STING ER exit protein</fullName>
        <shortName evidence="1">STEEP</shortName>
    </recommendedName>
</protein>
<comment type="function">
    <text evidence="1">Molecular adapter that stimulates membrane curvature formation and subsequent endoplasmic reticulum exit site (ERES) establishment by recruiting PI3K complex I, leading to COPII vesicle-mediated transport. Promotes endoplasmic reticulum (ER) exit of cGAMP-activated STING1 oligomers.</text>
</comment>
<comment type="subunit">
    <text evidence="1">Interacts with STING1; interaction takes place upon cGAMP-activation and STING1 phosphorylation by MAP3K7/TAK1 and leads to recruitment of PI3K complex I. Interacts with PIK3C3; the STING1-STEEP1 interaction leads to recruitment of PI3K complex I. Interacts with ATG14.</text>
</comment>
<comment type="subcellular location">
    <subcellularLocation>
        <location evidence="1">Cytoplasm</location>
    </subcellularLocation>
    <subcellularLocation>
        <location evidence="1">Endoplasmic reticulum membrane</location>
        <topology evidence="1">Peripheral membrane protein</topology>
        <orientation evidence="1">Cytoplasmic side</orientation>
    </subcellularLocation>
    <subcellularLocation>
        <location evidence="1">Nucleus</location>
    </subcellularLocation>
    <text evidence="1">Recruited to the endoplasmic reticulum following interaction with phosphorylated STING1.</text>
</comment>
<comment type="similarity">
    <text evidence="3">Belongs to the STEEP1 family.</text>
</comment>
<organism>
    <name type="scientific">Pongo abelii</name>
    <name type="common">Sumatran orangutan</name>
    <name type="synonym">Pongo pygmaeus abelii</name>
    <dbReference type="NCBI Taxonomy" id="9601"/>
    <lineage>
        <taxon>Eukaryota</taxon>
        <taxon>Metazoa</taxon>
        <taxon>Chordata</taxon>
        <taxon>Craniata</taxon>
        <taxon>Vertebrata</taxon>
        <taxon>Euteleostomi</taxon>
        <taxon>Mammalia</taxon>
        <taxon>Eutheria</taxon>
        <taxon>Euarchontoglires</taxon>
        <taxon>Primates</taxon>
        <taxon>Haplorrhini</taxon>
        <taxon>Catarrhini</taxon>
        <taxon>Hominidae</taxon>
        <taxon>Pongo</taxon>
    </lineage>
</organism>